<proteinExistence type="inferred from homology"/>
<comment type="function">
    <text evidence="1">Specifically methylates the guanosine in position 1516 of 16S rRNA.</text>
</comment>
<comment type="catalytic activity">
    <reaction evidence="1">
        <text>guanosine(1516) in 16S rRNA + S-adenosyl-L-methionine = N(2)-methylguanosine(1516) in 16S rRNA + S-adenosyl-L-homocysteine + H(+)</text>
        <dbReference type="Rhea" id="RHEA:43220"/>
        <dbReference type="Rhea" id="RHEA-COMP:10412"/>
        <dbReference type="Rhea" id="RHEA-COMP:10413"/>
        <dbReference type="ChEBI" id="CHEBI:15378"/>
        <dbReference type="ChEBI" id="CHEBI:57856"/>
        <dbReference type="ChEBI" id="CHEBI:59789"/>
        <dbReference type="ChEBI" id="CHEBI:74269"/>
        <dbReference type="ChEBI" id="CHEBI:74481"/>
        <dbReference type="EC" id="2.1.1.242"/>
    </reaction>
</comment>
<comment type="subcellular location">
    <subcellularLocation>
        <location evidence="1">Cytoplasm</location>
    </subcellularLocation>
</comment>
<comment type="similarity">
    <text evidence="1">Belongs to the methyltransferase superfamily. RsmJ family.</text>
</comment>
<reference key="1">
    <citation type="journal article" date="2004" name="Science">
        <title>A predator unmasked: life cycle of Bdellovibrio bacteriovorus from a genomic perspective.</title>
        <authorList>
            <person name="Rendulic S."/>
            <person name="Jagtap P."/>
            <person name="Rosinus A."/>
            <person name="Eppinger M."/>
            <person name="Baar C."/>
            <person name="Lanz C."/>
            <person name="Keller H."/>
            <person name="Lambert C."/>
            <person name="Evans K.J."/>
            <person name="Goesmann A."/>
            <person name="Meyer F."/>
            <person name="Sockett R.E."/>
            <person name="Schuster S.C."/>
        </authorList>
    </citation>
    <scope>NUCLEOTIDE SEQUENCE [LARGE SCALE GENOMIC DNA]</scope>
    <source>
        <strain>ATCC 15356 / DSM 50701 / NCIMB 9529 / HD100</strain>
    </source>
</reference>
<gene>
    <name evidence="1" type="primary">rsmJ</name>
    <name type="ordered locus">Bd0559</name>
</gene>
<evidence type="ECO:0000255" key="1">
    <source>
        <dbReference type="HAMAP-Rule" id="MF_01523"/>
    </source>
</evidence>
<keyword id="KW-0963">Cytoplasm</keyword>
<keyword id="KW-0489">Methyltransferase</keyword>
<keyword id="KW-1185">Reference proteome</keyword>
<keyword id="KW-0698">rRNA processing</keyword>
<keyword id="KW-0949">S-adenosyl-L-methionine</keyword>
<keyword id="KW-0808">Transferase</keyword>
<dbReference type="EC" id="2.1.1.242" evidence="1"/>
<dbReference type="EMBL" id="BX842647">
    <property type="protein sequence ID" value="CAE78530.1"/>
    <property type="molecule type" value="Genomic_DNA"/>
</dbReference>
<dbReference type="SMR" id="Q6MQB7"/>
<dbReference type="STRING" id="264462.Bd0559"/>
<dbReference type="KEGG" id="bba:Bd0559"/>
<dbReference type="eggNOG" id="COG2265">
    <property type="taxonomic scope" value="Bacteria"/>
</dbReference>
<dbReference type="HOGENOM" id="CLU_076324_0_1_7"/>
<dbReference type="Proteomes" id="UP000008080">
    <property type="component" value="Chromosome"/>
</dbReference>
<dbReference type="GO" id="GO:0005737">
    <property type="term" value="C:cytoplasm"/>
    <property type="evidence" value="ECO:0007669"/>
    <property type="project" value="UniProtKB-SubCell"/>
</dbReference>
<dbReference type="GO" id="GO:0008990">
    <property type="term" value="F:rRNA (guanine-N2-)-methyltransferase activity"/>
    <property type="evidence" value="ECO:0007669"/>
    <property type="project" value="UniProtKB-UniRule"/>
</dbReference>
<dbReference type="CDD" id="cd02440">
    <property type="entry name" value="AdoMet_MTases"/>
    <property type="match status" value="1"/>
</dbReference>
<dbReference type="Gene3D" id="3.40.50.150">
    <property type="entry name" value="Vaccinia Virus protein VP39"/>
    <property type="match status" value="1"/>
</dbReference>
<dbReference type="HAMAP" id="MF_01523">
    <property type="entry name" value="16SrRNA_methyltr_J"/>
    <property type="match status" value="1"/>
</dbReference>
<dbReference type="InterPro" id="IPR007536">
    <property type="entry name" value="16SrRNA_methylTrfase_J"/>
</dbReference>
<dbReference type="InterPro" id="IPR029063">
    <property type="entry name" value="SAM-dependent_MTases_sf"/>
</dbReference>
<dbReference type="PANTHER" id="PTHR36112">
    <property type="entry name" value="RIBOSOMAL RNA SMALL SUBUNIT METHYLTRANSFERASE J"/>
    <property type="match status" value="1"/>
</dbReference>
<dbReference type="PANTHER" id="PTHR36112:SF1">
    <property type="entry name" value="RIBOSOMAL RNA SMALL SUBUNIT METHYLTRANSFERASE J"/>
    <property type="match status" value="1"/>
</dbReference>
<dbReference type="Pfam" id="PF04445">
    <property type="entry name" value="SAM_MT"/>
    <property type="match status" value="1"/>
</dbReference>
<dbReference type="SUPFAM" id="SSF53335">
    <property type="entry name" value="S-adenosyl-L-methionine-dependent methyltransferases"/>
    <property type="match status" value="1"/>
</dbReference>
<name>RSMJ_BDEBA</name>
<accession>Q6MQB7</accession>
<protein>
    <recommendedName>
        <fullName evidence="1">Ribosomal RNA small subunit methyltransferase J</fullName>
        <ecNumber evidence="1">2.1.1.242</ecNumber>
    </recommendedName>
    <alternativeName>
        <fullName evidence="1">16S rRNA m2G1516 methyltransferase</fullName>
    </alternativeName>
    <alternativeName>
        <fullName evidence="1">rRNA (guanine-N(2)-)-methyltransferase</fullName>
    </alternativeName>
</protein>
<organism>
    <name type="scientific">Bdellovibrio bacteriovorus (strain ATCC 15356 / DSM 50701 / NCIMB 9529 / HD100)</name>
    <dbReference type="NCBI Taxonomy" id="264462"/>
    <lineage>
        <taxon>Bacteria</taxon>
        <taxon>Pseudomonadati</taxon>
        <taxon>Bdellovibrionota</taxon>
        <taxon>Bdellovibrionia</taxon>
        <taxon>Bdellovibrionales</taxon>
        <taxon>Pseudobdellovibrionaceae</taxon>
        <taxon>Bdellovibrio</taxon>
    </lineage>
</organism>
<feature type="chain" id="PRO_0000212058" description="Ribosomal RNA small subunit methyltransferase J">
    <location>
        <begin position="1"/>
        <end position="252"/>
    </location>
</feature>
<feature type="binding site" evidence="1">
    <location>
        <begin position="126"/>
        <end position="127"/>
    </location>
    <ligand>
        <name>S-adenosyl-L-methionine</name>
        <dbReference type="ChEBI" id="CHEBI:59789"/>
    </ligand>
</feature>
<feature type="binding site" evidence="1">
    <location>
        <position position="176"/>
    </location>
    <ligand>
        <name>S-adenosyl-L-methionine</name>
        <dbReference type="ChEBI" id="CHEBI:59789"/>
    </ligand>
</feature>
<sequence>MVSASLDGGLRICVRASAPEVHDKAVAWASFLKAPLNPENPEQYFFHFFVEPEGVYVRDQEKRLLEIDFDKNHLDYERKGHRGKNELIAKALGVAKGARRILDLSVGMGIDSVFLTQLGFSVIGVERSPVLYALLKEAFARTKKDSLKSYELHFADSLQFLKQNKGLLEVDAIYFDPMYPHKKKSALPKQEMVVFRDLVGHDDDASLVLQEALTWPVKRVVVKRPMQAEELLPGVRHSYEGKVVRYDTYVVG</sequence>